<protein>
    <recommendedName>
        <fullName evidence="1">Leucine--tRNA ligase</fullName>
        <ecNumber evidence="1">6.1.1.4</ecNumber>
    </recommendedName>
    <alternativeName>
        <fullName evidence="1">Leucyl-tRNA synthetase</fullName>
        <shortName evidence="1">LeuRS</shortName>
    </alternativeName>
</protein>
<dbReference type="EC" id="6.1.1.4" evidence="1"/>
<dbReference type="EMBL" id="CP000241">
    <property type="protein sequence ID" value="ABF85563.1"/>
    <property type="molecule type" value="Genomic_DNA"/>
</dbReference>
<dbReference type="RefSeq" id="WP_000345689.1">
    <property type="nucleotide sequence ID" value="NC_008086.1"/>
</dbReference>
<dbReference type="SMR" id="Q1CR59"/>
<dbReference type="KEGG" id="hpa:HPAG1_1496"/>
<dbReference type="HOGENOM" id="CLU_004427_0_0_7"/>
<dbReference type="GO" id="GO:0005829">
    <property type="term" value="C:cytosol"/>
    <property type="evidence" value="ECO:0007669"/>
    <property type="project" value="TreeGrafter"/>
</dbReference>
<dbReference type="GO" id="GO:0002161">
    <property type="term" value="F:aminoacyl-tRNA deacylase activity"/>
    <property type="evidence" value="ECO:0007669"/>
    <property type="project" value="InterPro"/>
</dbReference>
<dbReference type="GO" id="GO:0005524">
    <property type="term" value="F:ATP binding"/>
    <property type="evidence" value="ECO:0007669"/>
    <property type="project" value="UniProtKB-UniRule"/>
</dbReference>
<dbReference type="GO" id="GO:0004823">
    <property type="term" value="F:leucine-tRNA ligase activity"/>
    <property type="evidence" value="ECO:0007669"/>
    <property type="project" value="UniProtKB-UniRule"/>
</dbReference>
<dbReference type="GO" id="GO:0006429">
    <property type="term" value="P:leucyl-tRNA aminoacylation"/>
    <property type="evidence" value="ECO:0007669"/>
    <property type="project" value="UniProtKB-UniRule"/>
</dbReference>
<dbReference type="CDD" id="cd00812">
    <property type="entry name" value="LeuRS_core"/>
    <property type="match status" value="1"/>
</dbReference>
<dbReference type="FunFam" id="1.10.730.10:FF:000002">
    <property type="entry name" value="Leucine--tRNA ligase"/>
    <property type="match status" value="1"/>
</dbReference>
<dbReference type="FunFam" id="3.40.50.620:FF:000003">
    <property type="entry name" value="Leucine--tRNA ligase"/>
    <property type="match status" value="1"/>
</dbReference>
<dbReference type="FunFam" id="3.40.50.620:FF:000212">
    <property type="entry name" value="Leucine--tRNA ligase"/>
    <property type="match status" value="1"/>
</dbReference>
<dbReference type="Gene3D" id="3.10.20.590">
    <property type="match status" value="1"/>
</dbReference>
<dbReference type="Gene3D" id="3.40.50.620">
    <property type="entry name" value="HUPs"/>
    <property type="match status" value="2"/>
</dbReference>
<dbReference type="Gene3D" id="1.10.730.10">
    <property type="entry name" value="Isoleucyl-tRNA Synthetase, Domain 1"/>
    <property type="match status" value="1"/>
</dbReference>
<dbReference type="HAMAP" id="MF_00049_B">
    <property type="entry name" value="Leu_tRNA_synth_B"/>
    <property type="match status" value="1"/>
</dbReference>
<dbReference type="InterPro" id="IPR001412">
    <property type="entry name" value="aa-tRNA-synth_I_CS"/>
</dbReference>
<dbReference type="InterPro" id="IPR002300">
    <property type="entry name" value="aa-tRNA-synth_Ia"/>
</dbReference>
<dbReference type="InterPro" id="IPR002302">
    <property type="entry name" value="Leu-tRNA-ligase"/>
</dbReference>
<dbReference type="InterPro" id="IPR025709">
    <property type="entry name" value="Leu_tRNA-synth_edit"/>
</dbReference>
<dbReference type="InterPro" id="IPR015413">
    <property type="entry name" value="Methionyl/Leucyl_tRNA_Synth"/>
</dbReference>
<dbReference type="InterPro" id="IPR014729">
    <property type="entry name" value="Rossmann-like_a/b/a_fold"/>
</dbReference>
<dbReference type="InterPro" id="IPR009080">
    <property type="entry name" value="tRNAsynth_Ia_anticodon-bd"/>
</dbReference>
<dbReference type="InterPro" id="IPR009008">
    <property type="entry name" value="Val/Leu/Ile-tRNA-synth_edit"/>
</dbReference>
<dbReference type="NCBIfam" id="TIGR00396">
    <property type="entry name" value="leuS_bact"/>
    <property type="match status" value="1"/>
</dbReference>
<dbReference type="PANTHER" id="PTHR43740:SF2">
    <property type="entry name" value="LEUCINE--TRNA LIGASE, MITOCHONDRIAL"/>
    <property type="match status" value="1"/>
</dbReference>
<dbReference type="PANTHER" id="PTHR43740">
    <property type="entry name" value="LEUCYL-TRNA SYNTHETASE"/>
    <property type="match status" value="1"/>
</dbReference>
<dbReference type="Pfam" id="PF00133">
    <property type="entry name" value="tRNA-synt_1"/>
    <property type="match status" value="1"/>
</dbReference>
<dbReference type="Pfam" id="PF13603">
    <property type="entry name" value="tRNA-synt_1_2"/>
    <property type="match status" value="1"/>
</dbReference>
<dbReference type="Pfam" id="PF09334">
    <property type="entry name" value="tRNA-synt_1g"/>
    <property type="match status" value="1"/>
</dbReference>
<dbReference type="PRINTS" id="PR00985">
    <property type="entry name" value="TRNASYNTHLEU"/>
</dbReference>
<dbReference type="SUPFAM" id="SSF47323">
    <property type="entry name" value="Anticodon-binding domain of a subclass of class I aminoacyl-tRNA synthetases"/>
    <property type="match status" value="1"/>
</dbReference>
<dbReference type="SUPFAM" id="SSF52374">
    <property type="entry name" value="Nucleotidylyl transferase"/>
    <property type="match status" value="1"/>
</dbReference>
<dbReference type="SUPFAM" id="SSF50677">
    <property type="entry name" value="ValRS/IleRS/LeuRS editing domain"/>
    <property type="match status" value="1"/>
</dbReference>
<dbReference type="PROSITE" id="PS00178">
    <property type="entry name" value="AA_TRNA_LIGASE_I"/>
    <property type="match status" value="1"/>
</dbReference>
<accession>Q1CR59</accession>
<feature type="chain" id="PRO_0000334763" description="Leucine--tRNA ligase">
    <location>
        <begin position="1"/>
        <end position="806"/>
    </location>
</feature>
<feature type="short sequence motif" description="'HIGH' region">
    <location>
        <begin position="38"/>
        <end position="48"/>
    </location>
</feature>
<feature type="short sequence motif" description="'KMSKS' region">
    <location>
        <begin position="572"/>
        <end position="576"/>
    </location>
</feature>
<feature type="binding site" evidence="1">
    <location>
        <position position="575"/>
    </location>
    <ligand>
        <name>ATP</name>
        <dbReference type="ChEBI" id="CHEBI:30616"/>
    </ligand>
</feature>
<sequence length="806" mass="93122">MDFINIEKKWQEFWWKNKSFEPKDDFNLPKKYILSMLPYPSGEIHMGHVRNYTIGDALARYYRLHHYNVLHPMGFDSFGMPAENAAIKHGIHPKTWTYENIEAMQKEFEALGFSFSKNREFATSDPDYTKFEQQFFIDLWEKGLIYRKKAMLNWCPNDKTVLANEQVIDGRCWRCDTEVVQKELYQYYLKITNYAEELLKDLETLEDHWPSQVLIMQKNWIGKSSGLQFGFKIADECLKACNGIQEIEVFTTRADTIYGVTYIAIAPEHPLVEHAIKRVSQEDSKIIKAILNTTQRERALEKKGAFLGIYAIHPLTKQKIPVWVANFALANYGSGALMGVPACDERDFEFANLYHIPIKVITQSLQNLPHTKEEVLKNSGEWSDLSSSVAREQIIAYFEKENLGKRVINYRLQDWGVSRQRYWGAPIPMIHCKHCGIVPETQLPVTLPEDIVIDGEGNPLEKHASWKFAQCPKCHKDALRETDTMDTFIQSSWYFLRYTTPKNQRENQAFDQNYLKYFMPVDTYIGGIEHAILHLLYARFFTKALRDLGYLHLDEPFKQLITQGMVLKDGAKMSKSKGNVVSPKEILKKYGADAARLFILFAAPPAKELEWNDSALEGAHRFIKRLYDKANAITPTTSKPEFKGVILNEAQKLARKKVYEALKKSHEIFNKTESTYAFNTLIASCMEALNALSAQNNERILCEGYFVLLQILEPIIPHTAWELSERLFKRENFKPIAIDESALMEDFMTLGLTINGKRRAELKVNINASKEEIIVLAKKELEKYLEKASVKKEIYVPNKLVNFVIA</sequence>
<evidence type="ECO:0000255" key="1">
    <source>
        <dbReference type="HAMAP-Rule" id="MF_00049"/>
    </source>
</evidence>
<keyword id="KW-0030">Aminoacyl-tRNA synthetase</keyword>
<keyword id="KW-0067">ATP-binding</keyword>
<keyword id="KW-0963">Cytoplasm</keyword>
<keyword id="KW-0436">Ligase</keyword>
<keyword id="KW-0547">Nucleotide-binding</keyword>
<keyword id="KW-0648">Protein biosynthesis</keyword>
<proteinExistence type="inferred from homology"/>
<reference key="1">
    <citation type="journal article" date="2006" name="Proc. Natl. Acad. Sci. U.S.A.">
        <title>The complete genome sequence of a chronic atrophic gastritis Helicobacter pylori strain: evolution during disease progression.</title>
        <authorList>
            <person name="Oh J.D."/>
            <person name="Kling-Baeckhed H."/>
            <person name="Giannakis M."/>
            <person name="Xu J."/>
            <person name="Fulton R.S."/>
            <person name="Fulton L.A."/>
            <person name="Cordum H.S."/>
            <person name="Wang C."/>
            <person name="Elliott G."/>
            <person name="Edwards J."/>
            <person name="Mardis E.R."/>
            <person name="Engstrand L.G."/>
            <person name="Gordon J.I."/>
        </authorList>
    </citation>
    <scope>NUCLEOTIDE SEQUENCE [LARGE SCALE GENOMIC DNA]</scope>
    <source>
        <strain>HPAG1</strain>
    </source>
</reference>
<organism>
    <name type="scientific">Helicobacter pylori (strain HPAG1)</name>
    <dbReference type="NCBI Taxonomy" id="357544"/>
    <lineage>
        <taxon>Bacteria</taxon>
        <taxon>Pseudomonadati</taxon>
        <taxon>Campylobacterota</taxon>
        <taxon>Epsilonproteobacteria</taxon>
        <taxon>Campylobacterales</taxon>
        <taxon>Helicobacteraceae</taxon>
        <taxon>Helicobacter</taxon>
    </lineage>
</organism>
<comment type="catalytic activity">
    <reaction evidence="1">
        <text>tRNA(Leu) + L-leucine + ATP = L-leucyl-tRNA(Leu) + AMP + diphosphate</text>
        <dbReference type="Rhea" id="RHEA:11688"/>
        <dbReference type="Rhea" id="RHEA-COMP:9613"/>
        <dbReference type="Rhea" id="RHEA-COMP:9622"/>
        <dbReference type="ChEBI" id="CHEBI:30616"/>
        <dbReference type="ChEBI" id="CHEBI:33019"/>
        <dbReference type="ChEBI" id="CHEBI:57427"/>
        <dbReference type="ChEBI" id="CHEBI:78442"/>
        <dbReference type="ChEBI" id="CHEBI:78494"/>
        <dbReference type="ChEBI" id="CHEBI:456215"/>
        <dbReference type="EC" id="6.1.1.4"/>
    </reaction>
</comment>
<comment type="subcellular location">
    <subcellularLocation>
        <location evidence="1">Cytoplasm</location>
    </subcellularLocation>
</comment>
<comment type="similarity">
    <text evidence="1">Belongs to the class-I aminoacyl-tRNA synthetase family.</text>
</comment>
<name>SYL_HELPH</name>
<gene>
    <name evidence="1" type="primary">leuS</name>
    <name type="ordered locus">HPAG1_1496</name>
</gene>